<reference key="1">
    <citation type="journal article" date="2010" name="PLoS ONE">
        <title>Genome sequence of Cronobacter sakazakii BAA-894 and comparative genomic hybridization analysis with other Cronobacter species.</title>
        <authorList>
            <person name="Kucerova E."/>
            <person name="Clifton S.W."/>
            <person name="Xia X.Q."/>
            <person name="Long F."/>
            <person name="Porwollik S."/>
            <person name="Fulton L."/>
            <person name="Fronick C."/>
            <person name="Minx P."/>
            <person name="Kyung K."/>
            <person name="Warren W."/>
            <person name="Fulton R."/>
            <person name="Feng D."/>
            <person name="Wollam A."/>
            <person name="Shah N."/>
            <person name="Bhonagiri V."/>
            <person name="Nash W.E."/>
            <person name="Hallsworth-Pepin K."/>
            <person name="Wilson R.K."/>
            <person name="McClelland M."/>
            <person name="Forsythe S.J."/>
        </authorList>
    </citation>
    <scope>NUCLEOTIDE SEQUENCE [LARGE SCALE GENOMIC DNA]</scope>
    <source>
        <strain>ATCC BAA-894</strain>
    </source>
</reference>
<dbReference type="EC" id="3.6.1.7" evidence="1"/>
<dbReference type="EMBL" id="CP000783">
    <property type="protein sequence ID" value="ABU77627.1"/>
    <property type="molecule type" value="Genomic_DNA"/>
</dbReference>
<dbReference type="SMR" id="A7ME43"/>
<dbReference type="KEGG" id="esa:ESA_02381"/>
<dbReference type="HOGENOM" id="CLU_141932_1_2_6"/>
<dbReference type="Proteomes" id="UP000000260">
    <property type="component" value="Chromosome"/>
</dbReference>
<dbReference type="GO" id="GO:0003998">
    <property type="term" value="F:acylphosphatase activity"/>
    <property type="evidence" value="ECO:0007669"/>
    <property type="project" value="UniProtKB-UniRule"/>
</dbReference>
<dbReference type="FunFam" id="3.30.70.100:FF:000012">
    <property type="entry name" value="Acylphosphatase"/>
    <property type="match status" value="1"/>
</dbReference>
<dbReference type="Gene3D" id="3.30.70.100">
    <property type="match status" value="1"/>
</dbReference>
<dbReference type="HAMAP" id="MF_01450">
    <property type="entry name" value="Acylphosphatase_entero"/>
    <property type="match status" value="1"/>
</dbReference>
<dbReference type="InterPro" id="IPR020456">
    <property type="entry name" value="Acylphosphatase"/>
</dbReference>
<dbReference type="InterPro" id="IPR001792">
    <property type="entry name" value="Acylphosphatase-like_dom"/>
</dbReference>
<dbReference type="InterPro" id="IPR036046">
    <property type="entry name" value="Acylphosphatase-like_dom_sf"/>
</dbReference>
<dbReference type="InterPro" id="IPR028627">
    <property type="entry name" value="Acylphosphatase_bac"/>
</dbReference>
<dbReference type="InterPro" id="IPR017968">
    <property type="entry name" value="Acylphosphatase_CS"/>
</dbReference>
<dbReference type="NCBIfam" id="NF011000">
    <property type="entry name" value="PRK14426.1"/>
    <property type="match status" value="1"/>
</dbReference>
<dbReference type="PANTHER" id="PTHR47268">
    <property type="entry name" value="ACYLPHOSPHATASE"/>
    <property type="match status" value="1"/>
</dbReference>
<dbReference type="PANTHER" id="PTHR47268:SF4">
    <property type="entry name" value="ACYLPHOSPHATASE"/>
    <property type="match status" value="1"/>
</dbReference>
<dbReference type="Pfam" id="PF00708">
    <property type="entry name" value="Acylphosphatase"/>
    <property type="match status" value="1"/>
</dbReference>
<dbReference type="SUPFAM" id="SSF54975">
    <property type="entry name" value="Acylphosphatase/BLUF domain-like"/>
    <property type="match status" value="1"/>
</dbReference>
<dbReference type="PROSITE" id="PS00150">
    <property type="entry name" value="ACYLPHOSPHATASE_1"/>
    <property type="match status" value="1"/>
</dbReference>
<dbReference type="PROSITE" id="PS00151">
    <property type="entry name" value="ACYLPHOSPHATASE_2"/>
    <property type="match status" value="1"/>
</dbReference>
<dbReference type="PROSITE" id="PS51160">
    <property type="entry name" value="ACYLPHOSPHATASE_3"/>
    <property type="match status" value="1"/>
</dbReference>
<gene>
    <name type="primary">acyP</name>
    <name type="ordered locus">ESA_02381</name>
</gene>
<evidence type="ECO:0000255" key="1">
    <source>
        <dbReference type="HAMAP-Rule" id="MF_01450"/>
    </source>
</evidence>
<keyword id="KW-0378">Hydrolase</keyword>
<keyword id="KW-1185">Reference proteome</keyword>
<comment type="catalytic activity">
    <reaction evidence="1">
        <text>an acyl phosphate + H2O = a carboxylate + phosphate + H(+)</text>
        <dbReference type="Rhea" id="RHEA:14965"/>
        <dbReference type="ChEBI" id="CHEBI:15377"/>
        <dbReference type="ChEBI" id="CHEBI:15378"/>
        <dbReference type="ChEBI" id="CHEBI:29067"/>
        <dbReference type="ChEBI" id="CHEBI:43474"/>
        <dbReference type="ChEBI" id="CHEBI:59918"/>
        <dbReference type="EC" id="3.6.1.7"/>
    </reaction>
</comment>
<comment type="similarity">
    <text evidence="1">Belongs to the acylphosphatase family.</text>
</comment>
<name>ACYP_CROS8</name>
<protein>
    <recommendedName>
        <fullName evidence="1">Acylphosphatase</fullName>
        <ecNumber evidence="1">3.6.1.7</ecNumber>
    </recommendedName>
    <alternativeName>
        <fullName evidence="1">Acylphosphate phosphohydrolase</fullName>
    </alternativeName>
</protein>
<organism>
    <name type="scientific">Cronobacter sakazakii (strain ATCC BAA-894)</name>
    <name type="common">Enterobacter sakazakii</name>
    <dbReference type="NCBI Taxonomy" id="290339"/>
    <lineage>
        <taxon>Bacteria</taxon>
        <taxon>Pseudomonadati</taxon>
        <taxon>Pseudomonadota</taxon>
        <taxon>Gammaproteobacteria</taxon>
        <taxon>Enterobacterales</taxon>
        <taxon>Enterobacteriaceae</taxon>
        <taxon>Cronobacter</taxon>
    </lineage>
</organism>
<proteinExistence type="inferred from homology"/>
<feature type="chain" id="PRO_0000326704" description="Acylphosphatase">
    <location>
        <begin position="1"/>
        <end position="87"/>
    </location>
</feature>
<feature type="domain" description="Acylphosphatase-like" evidence="1">
    <location>
        <begin position="1"/>
        <end position="87"/>
    </location>
</feature>
<feature type="active site" evidence="1">
    <location>
        <position position="14"/>
    </location>
</feature>
<feature type="active site" evidence="1">
    <location>
        <position position="32"/>
    </location>
</feature>
<accession>A7ME43</accession>
<sequence length="87" mass="9771">MAWVHGRVQGVGFRYTTQHEATRLGLTGYARNLDDGSVEVLACGEAEQVEKLIAWLKAGGPRSAHVEKVLTEPHSPTEDYQDFRIRY</sequence>